<comment type="function">
    <text evidence="1">Reversibly catalyzes the transfer of the carbamoyl group from carbamoyl phosphate (CP) to the N(epsilon) atom of ornithine (ORN) to produce L-citrulline.</text>
</comment>
<comment type="catalytic activity">
    <reaction evidence="2">
        <text>carbamoyl phosphate + L-ornithine = L-citrulline + phosphate + H(+)</text>
        <dbReference type="Rhea" id="RHEA:19513"/>
        <dbReference type="ChEBI" id="CHEBI:15378"/>
        <dbReference type="ChEBI" id="CHEBI:43474"/>
        <dbReference type="ChEBI" id="CHEBI:46911"/>
        <dbReference type="ChEBI" id="CHEBI:57743"/>
        <dbReference type="ChEBI" id="CHEBI:58228"/>
        <dbReference type="EC" id="2.1.3.3"/>
    </reaction>
</comment>
<comment type="pathway">
    <text evidence="2">Amino-acid biosynthesis; L-arginine biosynthesis; L-arginine from L-ornithine and carbamoyl phosphate: step 1/3.</text>
</comment>
<comment type="subcellular location">
    <subcellularLocation>
        <location evidence="2">Cytoplasm</location>
    </subcellularLocation>
</comment>
<comment type="similarity">
    <text evidence="2">Belongs to the aspartate/ornithine carbamoyltransferase superfamily. OTCase family.</text>
</comment>
<accession>Q0AEE3</accession>
<protein>
    <recommendedName>
        <fullName evidence="2">Ornithine carbamoyltransferase</fullName>
        <shortName evidence="2">OTCase</shortName>
        <ecNumber evidence="2">2.1.3.3</ecNumber>
    </recommendedName>
</protein>
<reference key="1">
    <citation type="journal article" date="2007" name="Environ. Microbiol.">
        <title>Whole-genome analysis of the ammonia-oxidizing bacterium, Nitrosomonas eutropha C91: implications for niche adaptation.</title>
        <authorList>
            <person name="Stein L.Y."/>
            <person name="Arp D.J."/>
            <person name="Berube P.M."/>
            <person name="Chain P.S."/>
            <person name="Hauser L."/>
            <person name="Jetten M.S."/>
            <person name="Klotz M.G."/>
            <person name="Larimer F.W."/>
            <person name="Norton J.M."/>
            <person name="Op den Camp H.J.M."/>
            <person name="Shin M."/>
            <person name="Wei X."/>
        </authorList>
    </citation>
    <scope>NUCLEOTIDE SEQUENCE [LARGE SCALE GENOMIC DNA]</scope>
    <source>
        <strain>DSM 101675 / C91 / Nm57</strain>
    </source>
</reference>
<gene>
    <name evidence="2" type="primary">argF</name>
    <name type="ordered locus">Neut_2066</name>
</gene>
<dbReference type="EC" id="2.1.3.3" evidence="2"/>
<dbReference type="EMBL" id="CP000450">
    <property type="protein sequence ID" value="ABI60289.1"/>
    <property type="molecule type" value="Genomic_DNA"/>
</dbReference>
<dbReference type="RefSeq" id="WP_011635086.1">
    <property type="nucleotide sequence ID" value="NC_008344.1"/>
</dbReference>
<dbReference type="SMR" id="Q0AEE3"/>
<dbReference type="STRING" id="335283.Neut_2066"/>
<dbReference type="KEGG" id="net:Neut_2066"/>
<dbReference type="eggNOG" id="COG0078">
    <property type="taxonomic scope" value="Bacteria"/>
</dbReference>
<dbReference type="HOGENOM" id="CLU_043846_3_2_4"/>
<dbReference type="OrthoDB" id="9802587at2"/>
<dbReference type="UniPathway" id="UPA00068">
    <property type="reaction ID" value="UER00112"/>
</dbReference>
<dbReference type="Proteomes" id="UP000001966">
    <property type="component" value="Chromosome"/>
</dbReference>
<dbReference type="GO" id="GO:0005737">
    <property type="term" value="C:cytoplasm"/>
    <property type="evidence" value="ECO:0007669"/>
    <property type="project" value="UniProtKB-SubCell"/>
</dbReference>
<dbReference type="GO" id="GO:0016597">
    <property type="term" value="F:amino acid binding"/>
    <property type="evidence" value="ECO:0007669"/>
    <property type="project" value="InterPro"/>
</dbReference>
<dbReference type="GO" id="GO:0004585">
    <property type="term" value="F:ornithine carbamoyltransferase activity"/>
    <property type="evidence" value="ECO:0007669"/>
    <property type="project" value="UniProtKB-UniRule"/>
</dbReference>
<dbReference type="GO" id="GO:0042450">
    <property type="term" value="P:arginine biosynthetic process via ornithine"/>
    <property type="evidence" value="ECO:0007669"/>
    <property type="project" value="TreeGrafter"/>
</dbReference>
<dbReference type="GO" id="GO:0019240">
    <property type="term" value="P:citrulline biosynthetic process"/>
    <property type="evidence" value="ECO:0007669"/>
    <property type="project" value="TreeGrafter"/>
</dbReference>
<dbReference type="GO" id="GO:0006526">
    <property type="term" value="P:L-arginine biosynthetic process"/>
    <property type="evidence" value="ECO:0007669"/>
    <property type="project" value="UniProtKB-UniRule"/>
</dbReference>
<dbReference type="FunFam" id="3.40.50.1370:FF:000008">
    <property type="entry name" value="Ornithine carbamoyltransferase"/>
    <property type="match status" value="1"/>
</dbReference>
<dbReference type="Gene3D" id="3.40.50.1370">
    <property type="entry name" value="Aspartate/ornithine carbamoyltransferase"/>
    <property type="match status" value="2"/>
</dbReference>
<dbReference type="HAMAP" id="MF_01109">
    <property type="entry name" value="OTCase"/>
    <property type="match status" value="1"/>
</dbReference>
<dbReference type="InterPro" id="IPR006132">
    <property type="entry name" value="Asp/Orn_carbamoyltranf_P-bd"/>
</dbReference>
<dbReference type="InterPro" id="IPR006130">
    <property type="entry name" value="Asp/Orn_carbamoylTrfase"/>
</dbReference>
<dbReference type="InterPro" id="IPR036901">
    <property type="entry name" value="Asp/Orn_carbamoylTrfase_sf"/>
</dbReference>
<dbReference type="InterPro" id="IPR006131">
    <property type="entry name" value="Asp_carbamoyltransf_Asp/Orn-bd"/>
</dbReference>
<dbReference type="InterPro" id="IPR002292">
    <property type="entry name" value="Orn/put_carbamltrans"/>
</dbReference>
<dbReference type="InterPro" id="IPR024904">
    <property type="entry name" value="OTCase_ArgI"/>
</dbReference>
<dbReference type="NCBIfam" id="TIGR00658">
    <property type="entry name" value="orni_carb_tr"/>
    <property type="match status" value="1"/>
</dbReference>
<dbReference type="NCBIfam" id="NF001986">
    <property type="entry name" value="PRK00779.1"/>
    <property type="match status" value="1"/>
</dbReference>
<dbReference type="PANTHER" id="PTHR45753">
    <property type="entry name" value="ORNITHINE CARBAMOYLTRANSFERASE, MITOCHONDRIAL"/>
    <property type="match status" value="1"/>
</dbReference>
<dbReference type="PANTHER" id="PTHR45753:SF3">
    <property type="entry name" value="ORNITHINE TRANSCARBAMYLASE, MITOCHONDRIAL"/>
    <property type="match status" value="1"/>
</dbReference>
<dbReference type="Pfam" id="PF00185">
    <property type="entry name" value="OTCace"/>
    <property type="match status" value="1"/>
</dbReference>
<dbReference type="Pfam" id="PF02729">
    <property type="entry name" value="OTCace_N"/>
    <property type="match status" value="1"/>
</dbReference>
<dbReference type="PRINTS" id="PR00100">
    <property type="entry name" value="AOTCASE"/>
</dbReference>
<dbReference type="PRINTS" id="PR00102">
    <property type="entry name" value="OTCASE"/>
</dbReference>
<dbReference type="SUPFAM" id="SSF53671">
    <property type="entry name" value="Aspartate/ornithine carbamoyltransferase"/>
    <property type="match status" value="1"/>
</dbReference>
<dbReference type="PROSITE" id="PS00097">
    <property type="entry name" value="CARBAMOYLTRANSFERASE"/>
    <property type="match status" value="1"/>
</dbReference>
<feature type="chain" id="PRO_1000137100" description="Ornithine carbamoyltransferase">
    <location>
        <begin position="1"/>
        <end position="307"/>
    </location>
</feature>
<feature type="binding site" evidence="2">
    <location>
        <begin position="53"/>
        <end position="56"/>
    </location>
    <ligand>
        <name>carbamoyl phosphate</name>
        <dbReference type="ChEBI" id="CHEBI:58228"/>
    </ligand>
</feature>
<feature type="binding site" evidence="2">
    <location>
        <position position="80"/>
    </location>
    <ligand>
        <name>carbamoyl phosphate</name>
        <dbReference type="ChEBI" id="CHEBI:58228"/>
    </ligand>
</feature>
<feature type="binding site" evidence="2">
    <location>
        <position position="104"/>
    </location>
    <ligand>
        <name>carbamoyl phosphate</name>
        <dbReference type="ChEBI" id="CHEBI:58228"/>
    </ligand>
</feature>
<feature type="binding site" evidence="2">
    <location>
        <begin position="131"/>
        <end position="134"/>
    </location>
    <ligand>
        <name>carbamoyl phosphate</name>
        <dbReference type="ChEBI" id="CHEBI:58228"/>
    </ligand>
</feature>
<feature type="binding site" evidence="2">
    <location>
        <position position="162"/>
    </location>
    <ligand>
        <name>L-ornithine</name>
        <dbReference type="ChEBI" id="CHEBI:46911"/>
    </ligand>
</feature>
<feature type="binding site" evidence="2">
    <location>
        <position position="220"/>
    </location>
    <ligand>
        <name>L-ornithine</name>
        <dbReference type="ChEBI" id="CHEBI:46911"/>
    </ligand>
</feature>
<feature type="binding site" evidence="2">
    <location>
        <begin position="224"/>
        <end position="225"/>
    </location>
    <ligand>
        <name>L-ornithine</name>
        <dbReference type="ChEBI" id="CHEBI:46911"/>
    </ligand>
</feature>
<feature type="binding site" evidence="2">
    <location>
        <begin position="260"/>
        <end position="261"/>
    </location>
    <ligand>
        <name>carbamoyl phosphate</name>
        <dbReference type="ChEBI" id="CHEBI:58228"/>
    </ligand>
</feature>
<feature type="binding site" evidence="2">
    <location>
        <position position="288"/>
    </location>
    <ligand>
        <name>carbamoyl phosphate</name>
        <dbReference type="ChEBI" id="CHEBI:58228"/>
    </ligand>
</feature>
<organism>
    <name type="scientific">Nitrosomonas eutropha (strain DSM 101675 / C91 / Nm57)</name>
    <dbReference type="NCBI Taxonomy" id="335283"/>
    <lineage>
        <taxon>Bacteria</taxon>
        <taxon>Pseudomonadati</taxon>
        <taxon>Pseudomonadota</taxon>
        <taxon>Betaproteobacteria</taxon>
        <taxon>Nitrosomonadales</taxon>
        <taxon>Nitrosomonadaceae</taxon>
        <taxon>Nitrosomonas</taxon>
    </lineage>
</organism>
<evidence type="ECO:0000250" key="1"/>
<evidence type="ECO:0000255" key="2">
    <source>
        <dbReference type="HAMAP-Rule" id="MF_01109"/>
    </source>
</evidence>
<proteinExistence type="inferred from homology"/>
<keyword id="KW-0028">Amino-acid biosynthesis</keyword>
<keyword id="KW-0055">Arginine biosynthesis</keyword>
<keyword id="KW-0963">Cytoplasm</keyword>
<keyword id="KW-0808">Transferase</keyword>
<sequence>MQIRHFLQFKDFDRLEFEYLFDRTRWIKNEFKQYRRYWPLTDRTLAMIFEKHSTRTRLSFEAGMHQLGGSAIYLSTRDTQLGRGEPVEDAARVISRMVDIITIRTHEHQIIERFAENSRVPVINGLTDEYHPCQILADIFTFIEHRGSITGKTITWIGDSNNVCNTWLQAAEIFDFNVHVSTPPGYEVEPERAGLYGTDHYEQFVSPHDAVKDADLVTTDVWTSMGFEDELDTRKNDFADFCVDAEMMACAKKEALFMHCLPAHRGEEVDAEVIDGPQSVVWDEAENRLHTQKALMEYLLLGRISVR</sequence>
<name>OTC_NITEC</name>